<feature type="chain" id="PRO_0000193822" description="AP-3 complex subunit sigma">
    <location>
        <begin position="1"/>
        <end position="194"/>
    </location>
</feature>
<proteinExistence type="evidence at protein level"/>
<reference key="1">
    <citation type="journal article" date="1997" name="EMBO J.">
        <title>Suppressors of YCK-encoded yeast casein kinase 1 deficiency define the four subunits of a novel clathrin AP-like complex.</title>
        <authorList>
            <person name="Panek H.R."/>
            <person name="Stepp J.D."/>
            <person name="Engle H.M."/>
            <person name="Marks K.M."/>
            <person name="Tan P.K."/>
            <person name="Lemmon S.K."/>
            <person name="Robinson L.C."/>
        </authorList>
    </citation>
    <scope>NUCLEOTIDE SEQUENCE [GENOMIC DNA]</scope>
    <scope>IDENTIFICATION IN THE AP-3 COMPLEX</scope>
    <scope>FUNCTION OF THE AP-3 COMPLEX</scope>
</reference>
<reference key="2">
    <citation type="journal article" date="1996" name="EMBO J.">
        <title>Complete nucleotide sequence of Saccharomyces cerevisiae chromosome X.</title>
        <authorList>
            <person name="Galibert F."/>
            <person name="Alexandraki D."/>
            <person name="Baur A."/>
            <person name="Boles E."/>
            <person name="Chalwatzis N."/>
            <person name="Chuat J.-C."/>
            <person name="Coster F."/>
            <person name="Cziepluch C."/>
            <person name="de Haan M."/>
            <person name="Domdey H."/>
            <person name="Durand P."/>
            <person name="Entian K.-D."/>
            <person name="Gatius M."/>
            <person name="Goffeau A."/>
            <person name="Grivell L.A."/>
            <person name="Hennemann A."/>
            <person name="Herbert C.J."/>
            <person name="Heumann K."/>
            <person name="Hilger F."/>
            <person name="Hollenberg C.P."/>
            <person name="Huang M.-E."/>
            <person name="Jacq C."/>
            <person name="Jauniaux J.-C."/>
            <person name="Katsoulou C."/>
            <person name="Kirchrath L."/>
            <person name="Kleine K."/>
            <person name="Kordes E."/>
            <person name="Koetter P."/>
            <person name="Liebl S."/>
            <person name="Louis E.J."/>
            <person name="Manus V."/>
            <person name="Mewes H.-W."/>
            <person name="Miosga T."/>
            <person name="Obermaier B."/>
            <person name="Perea J."/>
            <person name="Pohl T.M."/>
            <person name="Portetelle D."/>
            <person name="Pujol A."/>
            <person name="Purnelle B."/>
            <person name="Ramezani Rad M."/>
            <person name="Rasmussen S.W."/>
            <person name="Rose M."/>
            <person name="Rossau R."/>
            <person name="Schaaff-Gerstenschlaeger I."/>
            <person name="Smits P.H.M."/>
            <person name="Scarcez T."/>
            <person name="Soriano N."/>
            <person name="To Van D."/>
            <person name="Tzermia M."/>
            <person name="Van Broekhoven A."/>
            <person name="Vandenbol M."/>
            <person name="Wedler H."/>
            <person name="von Wettstein D."/>
            <person name="Wambutt R."/>
            <person name="Zagulski M."/>
            <person name="Zollner A."/>
            <person name="Karpfinger-Hartl L."/>
        </authorList>
    </citation>
    <scope>NUCLEOTIDE SEQUENCE [LARGE SCALE GENOMIC DNA]</scope>
    <source>
        <strain>ATCC 204508 / S288c</strain>
    </source>
</reference>
<reference key="3">
    <citation type="journal article" date="2014" name="G3 (Bethesda)">
        <title>The reference genome sequence of Saccharomyces cerevisiae: Then and now.</title>
        <authorList>
            <person name="Engel S.R."/>
            <person name="Dietrich F.S."/>
            <person name="Fisk D.G."/>
            <person name="Binkley G."/>
            <person name="Balakrishnan R."/>
            <person name="Costanzo M.C."/>
            <person name="Dwight S.S."/>
            <person name="Hitz B.C."/>
            <person name="Karra K."/>
            <person name="Nash R.S."/>
            <person name="Weng S."/>
            <person name="Wong E.D."/>
            <person name="Lloyd P."/>
            <person name="Skrzypek M.S."/>
            <person name="Miyasato S.R."/>
            <person name="Simison M."/>
            <person name="Cherry J.M."/>
        </authorList>
    </citation>
    <scope>GENOME REANNOTATION</scope>
    <source>
        <strain>ATCC 204508 / S288c</strain>
    </source>
</reference>
<reference key="4">
    <citation type="journal article" date="1997" name="Cell">
        <title>The AP-3 adaptor complex is essential for cargo-selective transport to the yeast vacuole.</title>
        <authorList>
            <person name="Cowles C.R."/>
            <person name="Odorizzi G."/>
            <person name="Payne G.S."/>
            <person name="Emr S.D."/>
        </authorList>
    </citation>
    <scope>IDENTIFICATION IN THE AP-3 COMPLEX</scope>
    <scope>FUNCTION OF THE AP-3 COMPLEX</scope>
</reference>
<reference key="5">
    <citation type="journal article" date="1999" name="Nat. Cell Biol.">
        <title>Formation of AP-3 transport intermediates requires Vps41 function.</title>
        <authorList>
            <person name="Rehling P."/>
            <person name="Darsow T."/>
            <person name="Katzmann D.J."/>
            <person name="Emr S.D."/>
        </authorList>
    </citation>
    <scope>SUBCELLULAR LOCATION</scope>
    <scope>FUNCTION OF THE AP-3 COMPLEX</scope>
</reference>
<reference key="6">
    <citation type="journal article" date="2003" name="Nature">
        <title>Global analysis of protein localization in budding yeast.</title>
        <authorList>
            <person name="Huh W.-K."/>
            <person name="Falvo J.V."/>
            <person name="Gerke L.C."/>
            <person name="Carroll A.S."/>
            <person name="Howson R.W."/>
            <person name="Weissman J.S."/>
            <person name="O'Shea E.K."/>
        </authorList>
    </citation>
    <scope>SUBCELLULAR LOCATION [LARGE SCALE ANALYSIS]</scope>
</reference>
<reference key="7">
    <citation type="journal article" date="2003" name="Nature">
        <title>Global analysis of protein expression in yeast.</title>
        <authorList>
            <person name="Ghaemmaghami S."/>
            <person name="Huh W.-K."/>
            <person name="Bower K."/>
            <person name="Howson R.W."/>
            <person name="Belle A."/>
            <person name="Dephoure N."/>
            <person name="O'Shea E.K."/>
            <person name="Weissman J.S."/>
        </authorList>
    </citation>
    <scope>LEVEL OF PROTEIN EXPRESSION [LARGE SCALE ANALYSIS]</scope>
</reference>
<evidence type="ECO:0000269" key="1">
    <source>
    </source>
</evidence>
<evidence type="ECO:0000269" key="2">
    <source>
    </source>
</evidence>
<evidence type="ECO:0000269" key="3">
    <source>
    </source>
</evidence>
<evidence type="ECO:0000269" key="4">
    <source>
    </source>
</evidence>
<evidence type="ECO:0000269" key="5">
    <source>
    </source>
</evidence>
<evidence type="ECO:0000305" key="6"/>
<evidence type="ECO:0000305" key="7">
    <source>
    </source>
</evidence>
<comment type="function">
    <text evidence="1 4 5">Part of the AP-3 complex, an adaptor-related complex which is not clathrin-associated. The complex is associated with the Golgi region as well as more peripheral structures. It facilitates the budding of vesicles from the Golgi membrane and may be directly involved in trafficking to the vacuole. Required for the transport via the ALP pathway, which directs the transport of the cargo proteins PHO8 and VAM3 to the vacuole.</text>
</comment>
<comment type="subunit">
    <text evidence="4 5">Adaptor protein complex 3 (AP-3) is a heterotetramer composed of 2 large adaptins (APL5 and APL6), a medium adaptin (APM3) and a small adaptin (APS3).</text>
</comment>
<comment type="interaction">
    <interactant intactId="EBI-2619">
        <id>P47064</id>
    </interactant>
    <interactant intactId="EBI-29702">
        <id>Q08951</id>
        <label>APL5</label>
    </interactant>
    <organismsDiffer>false</organismsDiffer>
    <experiments>4</experiments>
</comment>
<comment type="subcellular location">
    <subcellularLocation>
        <location evidence="2">Golgi apparatus</location>
    </subcellularLocation>
    <subcellularLocation>
        <location evidence="1">Cytoplasmic vesicle membrane</location>
        <topology evidence="7">Peripheral membrane protein</topology>
        <orientation evidence="7">Cytoplasmic side</orientation>
    </subcellularLocation>
    <text evidence="1 6">Component of the coat surrounding the cytoplasmic face of coated vesicles located at the Golgi complex.</text>
</comment>
<comment type="miscellaneous">
    <text evidence="3">Present with 1240 molecules/cell in log phase SD medium.</text>
</comment>
<comment type="similarity">
    <text evidence="6">Belongs to the adaptor complexes small subunit family.</text>
</comment>
<sequence>MIHAVLIFNKKCQPRLVKFYTPVDLPKQKLLLEQVYELISQRNSDFQSSFLVTPPSLLLSNENNNDEVNNEDIQIIYKNYATLYFTFIVDDQESELAILDLIQTFVESLDRCFTEVNELDLIFNWQTLESVLEEIVQGGMVIETNVNRIVASVDELNKAAESTDSKIGRLTSTGFGSALQAFAQGGFAQWATGQ</sequence>
<protein>
    <recommendedName>
        <fullName>AP-3 complex subunit sigma</fullName>
    </recommendedName>
    <alternativeName>
        <fullName>AP-3 complex sigma3A subunit</fullName>
    </alternativeName>
    <alternativeName>
        <fullName>Adaptor-related protein complex 3 subunit sigma</fullName>
    </alternativeName>
    <alternativeName>
        <fullName>Clathrin-associated/assembly/adaptor protein, small 3</fullName>
    </alternativeName>
    <alternativeName>
        <fullName>Sigma-adaptin 3A</fullName>
    </alternativeName>
    <alternativeName>
        <fullName>Sigma3-adaptin</fullName>
    </alternativeName>
</protein>
<accession>P47064</accession>
<accession>D6VWF8</accession>
<keyword id="KW-0002">3D-structure</keyword>
<keyword id="KW-0968">Cytoplasmic vesicle</keyword>
<keyword id="KW-0333">Golgi apparatus</keyword>
<keyword id="KW-0472">Membrane</keyword>
<keyword id="KW-0653">Protein transport</keyword>
<keyword id="KW-1185">Reference proteome</keyword>
<keyword id="KW-0813">Transport</keyword>
<dbReference type="EMBL" id="U31448">
    <property type="protein sequence ID" value="AAA92051.1"/>
    <property type="molecule type" value="Genomic_DNA"/>
</dbReference>
<dbReference type="EMBL" id="Z49299">
    <property type="protein sequence ID" value="CAA89315.1"/>
    <property type="molecule type" value="Genomic_DNA"/>
</dbReference>
<dbReference type="EMBL" id="BK006943">
    <property type="protein sequence ID" value="DAA08774.1"/>
    <property type="molecule type" value="Genomic_DNA"/>
</dbReference>
<dbReference type="PIR" id="S56796">
    <property type="entry name" value="S56796"/>
</dbReference>
<dbReference type="RefSeq" id="NP_012510.3">
    <property type="nucleotide sequence ID" value="NM_001181458.3"/>
</dbReference>
<dbReference type="PDB" id="7P3X">
    <property type="method" value="EM"/>
    <property type="resolution" value="9.10 A"/>
    <property type="chains" value="S=1-194"/>
</dbReference>
<dbReference type="PDB" id="7P3Y">
    <property type="method" value="EM"/>
    <property type="resolution" value="10.10 A"/>
    <property type="chains" value="S=1-194"/>
</dbReference>
<dbReference type="PDB" id="7P3Z">
    <property type="method" value="EM"/>
    <property type="resolution" value="10.50 A"/>
    <property type="chains" value="S=1-194"/>
</dbReference>
<dbReference type="PDBsum" id="7P3X"/>
<dbReference type="PDBsum" id="7P3Y"/>
<dbReference type="PDBsum" id="7P3Z"/>
<dbReference type="SMR" id="P47064"/>
<dbReference type="BioGRID" id="33735">
    <property type="interactions" value="156"/>
</dbReference>
<dbReference type="ComplexPortal" id="CPX-535">
    <property type="entry name" value="Adapter complex AP-3"/>
</dbReference>
<dbReference type="DIP" id="DIP-3978N"/>
<dbReference type="FunCoup" id="P47064">
    <property type="interactions" value="477"/>
</dbReference>
<dbReference type="IntAct" id="P47064">
    <property type="interactions" value="6"/>
</dbReference>
<dbReference type="MINT" id="P47064"/>
<dbReference type="STRING" id="4932.YJL024C"/>
<dbReference type="iPTMnet" id="P47064"/>
<dbReference type="PaxDb" id="4932-YJL024C"/>
<dbReference type="PeptideAtlas" id="P47064"/>
<dbReference type="EnsemblFungi" id="YJL024C_mRNA">
    <property type="protein sequence ID" value="YJL024C"/>
    <property type="gene ID" value="YJL024C"/>
</dbReference>
<dbReference type="GeneID" id="853429"/>
<dbReference type="KEGG" id="sce:YJL024C"/>
<dbReference type="AGR" id="SGD:S000003561"/>
<dbReference type="SGD" id="S000003561">
    <property type="gene designation" value="APS3"/>
</dbReference>
<dbReference type="VEuPathDB" id="FungiDB:YJL024C"/>
<dbReference type="eggNOG" id="KOG0936">
    <property type="taxonomic scope" value="Eukaryota"/>
</dbReference>
<dbReference type="GeneTree" id="ENSGT00970000193421"/>
<dbReference type="HOGENOM" id="CLU_061221_2_2_1"/>
<dbReference type="InParanoid" id="P47064"/>
<dbReference type="OMA" id="DLIFNWQ"/>
<dbReference type="OrthoDB" id="10261046at2759"/>
<dbReference type="BioCyc" id="YEAST:G3O-31494-MONOMER"/>
<dbReference type="BioGRID-ORCS" id="853429">
    <property type="hits" value="0 hits in 10 CRISPR screens"/>
</dbReference>
<dbReference type="PRO" id="PR:P47064"/>
<dbReference type="Proteomes" id="UP000002311">
    <property type="component" value="Chromosome X"/>
</dbReference>
<dbReference type="RNAct" id="P47064">
    <property type="molecule type" value="protein"/>
</dbReference>
<dbReference type="GO" id="GO:0030123">
    <property type="term" value="C:AP-3 adaptor complex"/>
    <property type="evidence" value="ECO:0000315"/>
    <property type="project" value="SGD"/>
</dbReference>
<dbReference type="GO" id="GO:0030659">
    <property type="term" value="C:cytoplasmic vesicle membrane"/>
    <property type="evidence" value="ECO:0007669"/>
    <property type="project" value="UniProtKB-SubCell"/>
</dbReference>
<dbReference type="GO" id="GO:0005794">
    <property type="term" value="C:Golgi apparatus"/>
    <property type="evidence" value="ECO:0007669"/>
    <property type="project" value="UniProtKB-SubCell"/>
</dbReference>
<dbReference type="GO" id="GO:0043231">
    <property type="term" value="C:intracellular membrane-bounded organelle"/>
    <property type="evidence" value="ECO:0000318"/>
    <property type="project" value="GO_Central"/>
</dbReference>
<dbReference type="GO" id="GO:0006896">
    <property type="term" value="P:Golgi to vacuole transport"/>
    <property type="evidence" value="ECO:0000315"/>
    <property type="project" value="ComplexPortal"/>
</dbReference>
<dbReference type="GO" id="GO:0006886">
    <property type="term" value="P:intracellular protein transport"/>
    <property type="evidence" value="ECO:0000303"/>
    <property type="project" value="ComplexPortal"/>
</dbReference>
<dbReference type="GO" id="GO:0006623">
    <property type="term" value="P:protein targeting to vacuole"/>
    <property type="evidence" value="ECO:0000315"/>
    <property type="project" value="SGD"/>
</dbReference>
<dbReference type="GO" id="GO:0016192">
    <property type="term" value="P:vesicle-mediated transport"/>
    <property type="evidence" value="ECO:0000318"/>
    <property type="project" value="GO_Central"/>
</dbReference>
<dbReference type="FunFam" id="3.30.450.60:FF:000001">
    <property type="entry name" value="AP complex subunit sigma"/>
    <property type="match status" value="1"/>
</dbReference>
<dbReference type="Gene3D" id="3.30.450.60">
    <property type="match status" value="1"/>
</dbReference>
<dbReference type="InterPro" id="IPR016635">
    <property type="entry name" value="AP_complex_ssu"/>
</dbReference>
<dbReference type="InterPro" id="IPR022775">
    <property type="entry name" value="AP_mu_sigma_su"/>
</dbReference>
<dbReference type="InterPro" id="IPR000804">
    <property type="entry name" value="Clathrin_sm-chain_CS"/>
</dbReference>
<dbReference type="InterPro" id="IPR011012">
    <property type="entry name" value="Longin-like_dom_sf"/>
</dbReference>
<dbReference type="PANTHER" id="PTHR11753">
    <property type="entry name" value="ADAPTOR COMPLEXES SMALL SUBUNIT FAMILY"/>
    <property type="match status" value="1"/>
</dbReference>
<dbReference type="Pfam" id="PF01217">
    <property type="entry name" value="Clat_adaptor_s"/>
    <property type="match status" value="1"/>
</dbReference>
<dbReference type="PIRSF" id="PIRSF015588">
    <property type="entry name" value="AP_complex_sigma"/>
    <property type="match status" value="1"/>
</dbReference>
<dbReference type="SUPFAM" id="SSF64356">
    <property type="entry name" value="SNARE-like"/>
    <property type="match status" value="1"/>
</dbReference>
<dbReference type="PROSITE" id="PS00989">
    <property type="entry name" value="CLAT_ADAPTOR_S"/>
    <property type="match status" value="1"/>
</dbReference>
<organism>
    <name type="scientific">Saccharomyces cerevisiae (strain ATCC 204508 / S288c)</name>
    <name type="common">Baker's yeast</name>
    <dbReference type="NCBI Taxonomy" id="559292"/>
    <lineage>
        <taxon>Eukaryota</taxon>
        <taxon>Fungi</taxon>
        <taxon>Dikarya</taxon>
        <taxon>Ascomycota</taxon>
        <taxon>Saccharomycotina</taxon>
        <taxon>Saccharomycetes</taxon>
        <taxon>Saccharomycetales</taxon>
        <taxon>Saccharomycetaceae</taxon>
        <taxon>Saccharomyces</taxon>
    </lineage>
</organism>
<name>AP3S_YEAST</name>
<gene>
    <name type="primary">APS3</name>
    <name type="synonym">YKS7</name>
    <name type="ordered locus">YJL024C</name>
    <name type="ORF">J1274</name>
</gene>